<name>F6H1_ARATH</name>
<feature type="chain" id="PRO_0000419518" description="Feruloyl CoA ortho-hydroxylase 1">
    <location>
        <begin position="1"/>
        <end position="361"/>
    </location>
</feature>
<feature type="domain" description="Fe2OG dioxygenase" evidence="2">
    <location>
        <begin position="204"/>
        <end position="312"/>
    </location>
</feature>
<feature type="binding site" evidence="1">
    <location>
        <position position="220"/>
    </location>
    <ligand>
        <name>2-oxoglutarate</name>
        <dbReference type="ChEBI" id="CHEBI:16810"/>
    </ligand>
</feature>
<feature type="binding site" evidence="2">
    <location>
        <position position="235"/>
    </location>
    <ligand>
        <name>Fe cation</name>
        <dbReference type="ChEBI" id="CHEBI:24875"/>
    </ligand>
</feature>
<feature type="binding site" evidence="2">
    <location>
        <position position="237"/>
    </location>
    <ligand>
        <name>Fe cation</name>
        <dbReference type="ChEBI" id="CHEBI:24875"/>
    </ligand>
</feature>
<feature type="binding site" evidence="2">
    <location>
        <position position="293"/>
    </location>
    <ligand>
        <name>Fe cation</name>
        <dbReference type="ChEBI" id="CHEBI:24875"/>
    </ligand>
</feature>
<feature type="binding site" evidence="2">
    <location>
        <position position="303"/>
    </location>
    <ligand>
        <name>2-oxoglutarate</name>
        <dbReference type="ChEBI" id="CHEBI:16810"/>
    </ligand>
</feature>
<feature type="binding site" evidence="1">
    <location>
        <position position="305"/>
    </location>
    <ligand>
        <name>2-oxoglutarate</name>
        <dbReference type="ChEBI" id="CHEBI:16810"/>
    </ligand>
</feature>
<feature type="helix" evidence="11">
    <location>
        <begin position="17"/>
        <end position="20"/>
    </location>
</feature>
<feature type="turn" evidence="11">
    <location>
        <begin position="21"/>
        <end position="23"/>
    </location>
</feature>
<feature type="helix" evidence="11">
    <location>
        <begin position="26"/>
        <end position="31"/>
    </location>
</feature>
<feature type="turn" evidence="11">
    <location>
        <begin position="32"/>
        <end position="34"/>
    </location>
</feature>
<feature type="helix" evidence="11">
    <location>
        <begin position="40"/>
        <end position="42"/>
    </location>
</feature>
<feature type="helix" evidence="11">
    <location>
        <begin position="46"/>
        <end position="52"/>
    </location>
</feature>
<feature type="helix" evidence="11">
    <location>
        <begin position="72"/>
        <end position="85"/>
    </location>
</feature>
<feature type="strand" evidence="11">
    <location>
        <begin position="89"/>
        <end position="93"/>
    </location>
</feature>
<feature type="helix" evidence="11">
    <location>
        <begin position="98"/>
        <end position="112"/>
    </location>
</feature>
<feature type="helix" evidence="11">
    <location>
        <begin position="116"/>
        <end position="119"/>
    </location>
</feature>
<feature type="helix" evidence="11">
    <location>
        <begin position="120"/>
        <end position="122"/>
    </location>
</feature>
<feature type="turn" evidence="11">
    <location>
        <begin position="124"/>
        <end position="126"/>
    </location>
</feature>
<feature type="strand" evidence="11">
    <location>
        <begin position="132"/>
        <end position="137"/>
    </location>
</feature>
<feature type="strand" evidence="11">
    <location>
        <begin position="140"/>
        <end position="143"/>
    </location>
</feature>
<feature type="strand" evidence="11">
    <location>
        <begin position="150"/>
        <end position="155"/>
    </location>
</feature>
<feature type="helix" evidence="11">
    <location>
        <begin position="160"/>
        <end position="165"/>
    </location>
</feature>
<feature type="helix" evidence="11">
    <location>
        <begin position="171"/>
        <end position="192"/>
    </location>
</feature>
<feature type="turn" evidence="11">
    <location>
        <begin position="193"/>
        <end position="197"/>
    </location>
</feature>
<feature type="helix" evidence="11">
    <location>
        <begin position="205"/>
        <end position="209"/>
    </location>
</feature>
<feature type="strand" evidence="11">
    <location>
        <begin position="210"/>
        <end position="220"/>
    </location>
</feature>
<feature type="turn" evidence="11">
    <location>
        <begin position="226"/>
        <end position="228"/>
    </location>
</feature>
<feature type="strand" evidence="11">
    <location>
        <begin position="231"/>
        <end position="235"/>
    </location>
</feature>
<feature type="strand" evidence="11">
    <location>
        <begin position="239"/>
        <end position="241"/>
    </location>
</feature>
<feature type="strand" evidence="11">
    <location>
        <begin position="244"/>
        <end position="246"/>
    </location>
</feature>
<feature type="strand" evidence="11">
    <location>
        <begin position="252"/>
        <end position="255"/>
    </location>
</feature>
<feature type="strand" evidence="11">
    <location>
        <begin position="257"/>
        <end position="259"/>
    </location>
</feature>
<feature type="strand" evidence="11">
    <location>
        <begin position="262"/>
        <end position="265"/>
    </location>
</feature>
<feature type="strand" evidence="11">
    <location>
        <begin position="272"/>
        <end position="274"/>
    </location>
</feature>
<feature type="helix" evidence="11">
    <location>
        <begin position="278"/>
        <end position="283"/>
    </location>
</feature>
<feature type="turn" evidence="11">
    <location>
        <begin position="284"/>
        <end position="286"/>
    </location>
</feature>
<feature type="strand" evidence="11">
    <location>
        <begin position="293"/>
        <end position="295"/>
    </location>
</feature>
<feature type="strand" evidence="11">
    <location>
        <begin position="303"/>
        <end position="311"/>
    </location>
</feature>
<feature type="helix" evidence="11">
    <location>
        <begin position="322"/>
        <end position="325"/>
    </location>
</feature>
<feature type="helix" evidence="11">
    <location>
        <begin position="338"/>
        <end position="342"/>
    </location>
</feature>
<protein>
    <recommendedName>
        <fullName evidence="7">Feruloyl CoA ortho-hydroxylase 1</fullName>
        <ecNumber evidence="3 6">1.14.11.61</ecNumber>
    </recommendedName>
</protein>
<proteinExistence type="evidence at protein level"/>
<evidence type="ECO:0000250" key="1">
    <source>
        <dbReference type="UniProtKB" id="D4N500"/>
    </source>
</evidence>
<evidence type="ECO:0000255" key="2">
    <source>
        <dbReference type="PROSITE-ProRule" id="PRU00805"/>
    </source>
</evidence>
<evidence type="ECO:0000269" key="3">
    <source>
    </source>
</evidence>
<evidence type="ECO:0000269" key="4">
    <source>
    </source>
</evidence>
<evidence type="ECO:0000269" key="5">
    <source>
    </source>
</evidence>
<evidence type="ECO:0000269" key="6">
    <source>
    </source>
</evidence>
<evidence type="ECO:0000303" key="7">
    <source>
    </source>
</evidence>
<evidence type="ECO:0000305" key="8"/>
<evidence type="ECO:0000312" key="9">
    <source>
        <dbReference type="Araport" id="AT3G13610"/>
    </source>
</evidence>
<evidence type="ECO:0000312" key="10">
    <source>
        <dbReference type="EMBL" id="BAB02603.1"/>
    </source>
</evidence>
<evidence type="ECO:0007829" key="11">
    <source>
        <dbReference type="PDB" id="4XAE"/>
    </source>
</evidence>
<dbReference type="EC" id="1.14.11.61" evidence="3 6"/>
<dbReference type="EMBL" id="AP002038">
    <property type="protein sequence ID" value="BAB02603.1"/>
    <property type="molecule type" value="Genomic_DNA"/>
</dbReference>
<dbReference type="EMBL" id="CP002686">
    <property type="protein sequence ID" value="AEE75382.1"/>
    <property type="molecule type" value="Genomic_DNA"/>
</dbReference>
<dbReference type="EMBL" id="BT011745">
    <property type="protein sequence ID" value="AAS49108.1"/>
    <property type="molecule type" value="mRNA"/>
</dbReference>
<dbReference type="EMBL" id="AK221576">
    <property type="protein sequence ID" value="BAD95049.1"/>
    <property type="molecule type" value="mRNA"/>
</dbReference>
<dbReference type="RefSeq" id="NP_187970.1">
    <property type="nucleotide sequence ID" value="NM_112207.4"/>
</dbReference>
<dbReference type="PDB" id="4XAE">
    <property type="method" value="X-ray"/>
    <property type="resolution" value="2.77 A"/>
    <property type="chains" value="A/B=2-361"/>
</dbReference>
<dbReference type="PDBsum" id="4XAE"/>
<dbReference type="SMR" id="Q9LHN8"/>
<dbReference type="FunCoup" id="Q9LHN8">
    <property type="interactions" value="134"/>
</dbReference>
<dbReference type="STRING" id="3702.Q9LHN8"/>
<dbReference type="PaxDb" id="3702-AT3G13610.1"/>
<dbReference type="ProteomicsDB" id="222258"/>
<dbReference type="EnsemblPlants" id="AT3G13610.1">
    <property type="protein sequence ID" value="AT3G13610.1"/>
    <property type="gene ID" value="AT3G13610"/>
</dbReference>
<dbReference type="GeneID" id="820564"/>
<dbReference type="Gramene" id="AT3G13610.1">
    <property type="protein sequence ID" value="AT3G13610.1"/>
    <property type="gene ID" value="AT3G13610"/>
</dbReference>
<dbReference type="KEGG" id="ath:AT3G13610"/>
<dbReference type="Araport" id="AT3G13610"/>
<dbReference type="TAIR" id="AT3G13610">
    <property type="gene designation" value="F6'H1"/>
</dbReference>
<dbReference type="eggNOG" id="KOG0143">
    <property type="taxonomic scope" value="Eukaryota"/>
</dbReference>
<dbReference type="HOGENOM" id="CLU_010119_16_4_1"/>
<dbReference type="InParanoid" id="Q9LHN8"/>
<dbReference type="OMA" id="DSETWVH"/>
<dbReference type="OrthoDB" id="288590at2759"/>
<dbReference type="PhylomeDB" id="Q9LHN8"/>
<dbReference type="BioCyc" id="ARA:AT3G13610-MONOMER"/>
<dbReference type="BioCyc" id="MetaCyc:AT3G13610-MONOMER"/>
<dbReference type="BRENDA" id="1.14.11.61">
    <property type="organism ID" value="399"/>
</dbReference>
<dbReference type="EvolutionaryTrace" id="Q9LHN8"/>
<dbReference type="PRO" id="PR:Q9LHN8"/>
<dbReference type="Proteomes" id="UP000006548">
    <property type="component" value="Chromosome 3"/>
</dbReference>
<dbReference type="ExpressionAtlas" id="Q9LHN8">
    <property type="expression patterns" value="baseline and differential"/>
</dbReference>
<dbReference type="GO" id="GO:0051213">
    <property type="term" value="F:dioxygenase activity"/>
    <property type="evidence" value="ECO:0000314"/>
    <property type="project" value="TAIR"/>
</dbReference>
<dbReference type="GO" id="GO:0046872">
    <property type="term" value="F:metal ion binding"/>
    <property type="evidence" value="ECO:0007669"/>
    <property type="project" value="UniProtKB-KW"/>
</dbReference>
<dbReference type="GO" id="GO:0009805">
    <property type="term" value="P:coumarin biosynthetic process"/>
    <property type="evidence" value="ECO:0000315"/>
    <property type="project" value="UniProtKB"/>
</dbReference>
<dbReference type="GO" id="GO:0010421">
    <property type="term" value="P:hydrogen peroxide-mediated programmed cell death"/>
    <property type="evidence" value="ECO:0000315"/>
    <property type="project" value="TAIR"/>
</dbReference>
<dbReference type="GO" id="GO:0009699">
    <property type="term" value="P:phenylpropanoid biosynthetic process"/>
    <property type="evidence" value="ECO:0000315"/>
    <property type="project" value="TAIR"/>
</dbReference>
<dbReference type="GO" id="GO:1990641">
    <property type="term" value="P:response to iron ion starvation"/>
    <property type="evidence" value="ECO:0000315"/>
    <property type="project" value="UniProtKB"/>
</dbReference>
<dbReference type="FunFam" id="2.60.120.330:FF:000023">
    <property type="entry name" value="Feruloyl CoA ortho-hydroxylase 1"/>
    <property type="match status" value="1"/>
</dbReference>
<dbReference type="Gene3D" id="2.60.120.330">
    <property type="entry name" value="B-lactam Antibiotic, Isopenicillin N Synthase, Chain"/>
    <property type="match status" value="1"/>
</dbReference>
<dbReference type="InterPro" id="IPR026992">
    <property type="entry name" value="DIOX_N"/>
</dbReference>
<dbReference type="InterPro" id="IPR044861">
    <property type="entry name" value="IPNS-like_FE2OG_OXY"/>
</dbReference>
<dbReference type="InterPro" id="IPR027443">
    <property type="entry name" value="IPNS-like_sf"/>
</dbReference>
<dbReference type="InterPro" id="IPR005123">
    <property type="entry name" value="Oxoglu/Fe-dep_dioxygenase_dom"/>
</dbReference>
<dbReference type="InterPro" id="IPR050295">
    <property type="entry name" value="Plant_2OG-oxidoreductases"/>
</dbReference>
<dbReference type="PANTHER" id="PTHR47991">
    <property type="entry name" value="OXOGLUTARATE/IRON-DEPENDENT DIOXYGENASE"/>
    <property type="match status" value="1"/>
</dbReference>
<dbReference type="Pfam" id="PF03171">
    <property type="entry name" value="2OG-FeII_Oxy"/>
    <property type="match status" value="1"/>
</dbReference>
<dbReference type="Pfam" id="PF14226">
    <property type="entry name" value="DIOX_N"/>
    <property type="match status" value="1"/>
</dbReference>
<dbReference type="SUPFAM" id="SSF51197">
    <property type="entry name" value="Clavaminate synthase-like"/>
    <property type="match status" value="1"/>
</dbReference>
<dbReference type="PROSITE" id="PS51471">
    <property type="entry name" value="FE2OG_OXY"/>
    <property type="match status" value="1"/>
</dbReference>
<accession>Q9LHN8</accession>
<comment type="function">
    <text evidence="3 4 5 6">2-oxoglutarate (OG)- and Fe(II)-dependent dioxygenase (2OGD) involved in scopoletin biosynthesis (PubMed:18547395, PubMed:29581584). Converts feruloyl CoA into 6'-hydroxyferuloyl CoA but has no activity with ferulic acid, feruloylquinic acid, caffeic acid, caffeoyl CoA, p-coumaric acid, cinnamic acid, cinnamoyl CoA or benzoyl CoA (PubMed:18547395). Required for the production and secretion of compounds (e.g. fluorescent coumarins) that facilitate the mobilization and uptake of iron from sources with low bioavailability or in high pH-induced iron deficiency conditions (PubMed:23735511, PubMed:24246380). Involved in the pathway of sideretin biosynthesis from feruloyl CoA, a redox-active catecholic metabolite exuded by roots in response to iron deficiency in order to facilitate the uptake of iron; this pathway consists in the successive conversion from feruloyl CoA to scopoletin, from scopoletin to fraxetin and from fraxetin to sideretin (PubMed:29581584). Catalyzes the biosynthesis of scopoletin from feruloyl CoA (PubMed:29581584).</text>
</comment>
<comment type="catalytic activity">
    <reaction evidence="3">
        <text>(E)-feruloyl-CoA + 2-oxoglutarate + O2 = (E)-6-hydroxyferuloyl-CoA + succinate + CO2</text>
        <dbReference type="Rhea" id="RHEA:57856"/>
        <dbReference type="ChEBI" id="CHEBI:15379"/>
        <dbReference type="ChEBI" id="CHEBI:16526"/>
        <dbReference type="ChEBI" id="CHEBI:16810"/>
        <dbReference type="ChEBI" id="CHEBI:30031"/>
        <dbReference type="ChEBI" id="CHEBI:87305"/>
        <dbReference type="ChEBI" id="CHEBI:142390"/>
        <dbReference type="EC" id="1.14.11.61"/>
    </reaction>
</comment>
<comment type="catalytic activity">
    <reaction evidence="3 6">
        <text>(E)-6-hydroxyferuloyl-CoA = scopoletin + CoA</text>
        <dbReference type="Rhea" id="RHEA:57860"/>
        <dbReference type="ChEBI" id="CHEBI:17488"/>
        <dbReference type="ChEBI" id="CHEBI:57287"/>
        <dbReference type="ChEBI" id="CHEBI:142390"/>
    </reaction>
    <physiologicalReaction direction="left-to-right" evidence="3 6">
        <dbReference type="Rhea" id="RHEA:57861"/>
    </physiologicalReaction>
</comment>
<comment type="cofactor">
    <cofactor evidence="3">
        <name>L-ascorbate</name>
        <dbReference type="ChEBI" id="CHEBI:38290"/>
    </cofactor>
</comment>
<comment type="cofactor">
    <cofactor evidence="2">
        <name>Fe(2+)</name>
        <dbReference type="ChEBI" id="CHEBI:29033"/>
    </cofactor>
    <text evidence="2">Binds 1 Fe(2+) ion per subunit.</text>
</comment>
<comment type="biophysicochemical properties">
    <kinetics>
        <KM evidence="3">36 uM for feruloyl CoA</KM>
        <text evidence="3">kcat is 11 sec(-1) with feruloyl CoA as substrate.</text>
    </kinetics>
    <phDependence>
        <text evidence="3">Optimum pH is 6.5.</text>
    </phDependence>
</comment>
<comment type="pathway">
    <text evidence="6">Phenylpropanoid metabolism.</text>
</comment>
<comment type="tissue specificity">
    <text evidence="3 5">Highly expressed in roots, especially in the cortex.</text>
</comment>
<comment type="induction">
    <text evidence="3 4 5">Up-regulated by 2,4-D treatment (PubMed:18547395). Induced by iron deficiency, mainly in roots (PubMed:23735511, PubMed:24246380).</text>
</comment>
<comment type="disruption phenotype">
    <text evidence="3 4 5 6">No visible phenotype, but severe reductions in scopoletin and scopolin levels in the roots (PubMed:18547395, PubMed:29581584). Compromised iron uptake from an iron source of low bioavailability; this phenotype is partially rescued when grown alongside wild-type seedlings, presumably by secreted phenolics and flavins (PubMed:23735511). Loss of fluorescent coumarins (including sideretin, scopolin, scopoletin, esculin, esculetin, and fraxetin) root secretion in response to iron deficiency. Impaired iron-uptake ability at elevated pH (e.g. pH 7.2) leading to chlorotic and stunted plants; this phenotype is rescued by fraxetin, scopoletin, esculin, esculetin and sideretin treatments (PubMed:24246380, PubMed:29581584).</text>
</comment>
<comment type="similarity">
    <text evidence="8">Belongs to the iron/ascorbate-dependent oxidoreductase family.</text>
</comment>
<organism>
    <name type="scientific">Arabidopsis thaliana</name>
    <name type="common">Mouse-ear cress</name>
    <dbReference type="NCBI Taxonomy" id="3702"/>
    <lineage>
        <taxon>Eukaryota</taxon>
        <taxon>Viridiplantae</taxon>
        <taxon>Streptophyta</taxon>
        <taxon>Embryophyta</taxon>
        <taxon>Tracheophyta</taxon>
        <taxon>Spermatophyta</taxon>
        <taxon>Magnoliopsida</taxon>
        <taxon>eudicotyledons</taxon>
        <taxon>Gunneridae</taxon>
        <taxon>Pentapetalae</taxon>
        <taxon>rosids</taxon>
        <taxon>malvids</taxon>
        <taxon>Brassicales</taxon>
        <taxon>Brassicaceae</taxon>
        <taxon>Camelineae</taxon>
        <taxon>Arabidopsis</taxon>
    </lineage>
</organism>
<sequence length="361" mass="40671">MAPTLLTTQFSNPAEVTDFVVYKGNGVKGLSETGIKALPEQYIQPLEERLINKFVNETDEAIPVIDMSNPDEDRVAEAVCDAAEKWGFFQVINHGVPLEVLDDVKAATHKFFNLPVEEKRKFTKENSLSTTVRFGTSFSPLAEQALEWKDYLSLFFVSEAEAEQFWPDICRNETLEYINKSKKMVRRLLEYLGKNLNVKELDETKESLFMGSIRVNLNYYPICPNPDLTVGVGRHSDVSSLTILLQDQIGGLHVRSLASGNWVHVPPVAGSFVINIGDAMQIMSNGLYKSVEHRVLANGYNNRISVPIFVNPKPESVIGPLPEVIANGEEPIYRDVLYSDYVKYFFRKAHDGKKTVDYAKI</sequence>
<reference key="1">
    <citation type="journal article" date="2000" name="DNA Res.">
        <title>Structural analysis of Arabidopsis thaliana chromosome 3. II. Sequence features of the 4,251,695 bp regions covered by 90 P1, TAC and BAC clones.</title>
        <authorList>
            <person name="Kaneko T."/>
            <person name="Katoh T."/>
            <person name="Sato S."/>
            <person name="Nakamura Y."/>
            <person name="Asamizu E."/>
            <person name="Tabata S."/>
        </authorList>
    </citation>
    <scope>NUCLEOTIDE SEQUENCE [LARGE SCALE GENOMIC DNA]</scope>
    <source>
        <strain>cv. Columbia</strain>
    </source>
</reference>
<reference key="2">
    <citation type="journal article" date="2017" name="Plant J.">
        <title>Araport11: a complete reannotation of the Arabidopsis thaliana reference genome.</title>
        <authorList>
            <person name="Cheng C.Y."/>
            <person name="Krishnakumar V."/>
            <person name="Chan A.P."/>
            <person name="Thibaud-Nissen F."/>
            <person name="Schobel S."/>
            <person name="Town C.D."/>
        </authorList>
    </citation>
    <scope>GENOME REANNOTATION</scope>
    <source>
        <strain>cv. Columbia</strain>
    </source>
</reference>
<reference key="3">
    <citation type="submission" date="2004-03" db="EMBL/GenBank/DDBJ databases">
        <title>Arabidopsis ORF clones.</title>
        <authorList>
            <person name="Cheuk R."/>
            <person name="Chen H."/>
            <person name="Kim C.J."/>
            <person name="Shinn P."/>
            <person name="Carninci P."/>
            <person name="Hayashizaki Y."/>
            <person name="Ishida J."/>
            <person name="Kamiya A."/>
            <person name="Kawai J."/>
            <person name="Narusaka M."/>
            <person name="Sakurai T."/>
            <person name="Satou M."/>
            <person name="Seki M."/>
            <person name="Shinozaki K."/>
            <person name="Ecker J.R."/>
        </authorList>
    </citation>
    <scope>NUCLEOTIDE SEQUENCE [LARGE SCALE MRNA]</scope>
</reference>
<reference key="4">
    <citation type="submission" date="2005-03" db="EMBL/GenBank/DDBJ databases">
        <title>Large-scale analysis of RIKEN Arabidopsis full-length (RAFL) cDNAs.</title>
        <authorList>
            <person name="Totoki Y."/>
            <person name="Seki M."/>
            <person name="Ishida J."/>
            <person name="Nakajima M."/>
            <person name="Enju A."/>
            <person name="Kamiya A."/>
            <person name="Narusaka M."/>
            <person name="Shin-i T."/>
            <person name="Nakagawa M."/>
            <person name="Sakamoto N."/>
            <person name="Oishi K."/>
            <person name="Kohara Y."/>
            <person name="Kobayashi M."/>
            <person name="Toyoda A."/>
            <person name="Sakaki Y."/>
            <person name="Sakurai T."/>
            <person name="Iida K."/>
            <person name="Akiyama K."/>
            <person name="Satou M."/>
            <person name="Toyoda T."/>
            <person name="Konagaya A."/>
            <person name="Carninci P."/>
            <person name="Kawai J."/>
            <person name="Hayashizaki Y."/>
            <person name="Shinozaki K."/>
        </authorList>
    </citation>
    <scope>NUCLEOTIDE SEQUENCE [LARGE SCALE MRNA]</scope>
    <source>
        <strain>cv. Columbia</strain>
    </source>
</reference>
<reference key="5">
    <citation type="journal article" date="2008" name="Plant J.">
        <title>Scopoletin is biosynthesized via ortho-hydroxylation of feruloyl CoA by a 2-oxoglutarate-dependent dioxygenase in Arabidopsis thaliana.</title>
        <authorList>
            <person name="Kai K."/>
            <person name="Mizutani M."/>
            <person name="Kawamura N."/>
            <person name="Yamamoto R."/>
            <person name="Tamai M."/>
            <person name="Yamaguchi H."/>
            <person name="Sakata K."/>
            <person name="Shimizu B."/>
        </authorList>
    </citation>
    <scope>FUNCTION</scope>
    <scope>CATALYTIC ACTIVITY</scope>
    <scope>COFACTOR</scope>
    <scope>TISSUE SPECIFICITY</scope>
    <scope>DISRUPTION PHENOTYPE</scope>
    <scope>INDUCTION</scope>
    <scope>BIOPHYSICOCHEMICAL PROPERTIES</scope>
</reference>
<reference key="6">
    <citation type="journal article" date="2013" name="Plant Physiol.">
        <title>Mutually exclusive alterations in secondary metabolism are critical for the uptake of insoluble iron compounds by Arabidopsis and Medicago truncatula.</title>
        <authorList>
            <person name="Rodriguez-Celma J."/>
            <person name="Lin W.-D."/>
            <person name="Fu G.-M."/>
            <person name="Abadia J."/>
            <person name="Lopez-Millan A.-F."/>
            <person name="Schmidt W."/>
        </authorList>
    </citation>
    <scope>FUNCTION</scope>
    <scope>DISRUPTION PHENOTYPE</scope>
    <scope>INDUCTION BY IRON-DEFICIENCY</scope>
    <source>
        <strain>cv. Columbia</strain>
    </source>
</reference>
<reference key="7">
    <citation type="journal article" date="2014" name="Plant Physiol.">
        <title>Feruloyl-CoA 6'-Hydroxylase1-dependent coumarins mediate iron acquisition from alkaline substrates in Arabidopsis.</title>
        <authorList>
            <person name="Schmid N.B."/>
            <person name="Giehl R.F.H."/>
            <person name="Doell S."/>
            <person name="Mock H.-P."/>
            <person name="Strehmel N."/>
            <person name="Scheel D."/>
            <person name="Kong X."/>
            <person name="Hider R.C."/>
            <person name="von Wiren N."/>
        </authorList>
    </citation>
    <scope>FUNCTION</scope>
    <scope>DISRUPTION PHENOTYPE</scope>
    <scope>TISSUE SPECIFICITY</scope>
    <scope>INDUCTION BY IRON-DEFICIENCY</scope>
    <source>
        <strain>cv. Columbia</strain>
    </source>
</reference>
<reference key="8">
    <citation type="journal article" date="2018" name="Nat. Chem. Biol.">
        <title>Biosynthesis of redox-active metabolites in response to iron deficiency in plants.</title>
        <authorList>
            <person name="Rajniak J."/>
            <person name="Giehl R.F.H."/>
            <person name="Chang E."/>
            <person name="Murgia I."/>
            <person name="von Wiren N."/>
            <person name="Sattely E.S."/>
        </authorList>
    </citation>
    <scope>FUNCTION</scope>
    <scope>DISRUPTION PHENOTYPE</scope>
    <scope>CATALYTIC ACTIVITY</scope>
    <scope>PATHWAY</scope>
    <source>
        <strain>cv. Columbia</strain>
    </source>
</reference>
<reference key="9">
    <citation type="journal article" date="2015" name="Sci. Rep.">
        <title>Structural insights into substrate specificity of feruloyl-CoA 6'-hydroxylase from Arabidopsis thaliana.</title>
        <authorList>
            <person name="Sun X."/>
            <person name="Zhou D."/>
            <person name="Kandavelu P."/>
            <person name="Zhang H."/>
            <person name="Yuan Q."/>
            <person name="Wang B.C."/>
            <person name="Rose J."/>
            <person name="Yan Y."/>
        </authorList>
    </citation>
    <scope>X-RAY CRYSTALLOGRAPHY (2.77 ANGSTROMS) OF 2-361</scope>
</reference>
<keyword id="KW-0002">3D-structure</keyword>
<keyword id="KW-0223">Dioxygenase</keyword>
<keyword id="KW-0408">Iron</keyword>
<keyword id="KW-0479">Metal-binding</keyword>
<keyword id="KW-0560">Oxidoreductase</keyword>
<keyword id="KW-1185">Reference proteome</keyword>
<gene>
    <name evidence="7" type="primary">F6'H1</name>
    <name evidence="9" type="ordered locus">At3g13610</name>
    <name evidence="10" type="ORF">K20M4.5</name>
</gene>